<keyword id="KW-0963">Cytoplasm</keyword>
<keyword id="KW-0378">Hydrolase</keyword>
<keyword id="KW-0540">Nuclease</keyword>
<keyword id="KW-1185">Reference proteome</keyword>
<keyword id="KW-0690">Ribosome biogenesis</keyword>
<protein>
    <recommendedName>
        <fullName evidence="1">Putative pre-16S rRNA nuclease</fullName>
        <ecNumber evidence="1">3.1.-.-</ecNumber>
    </recommendedName>
</protein>
<gene>
    <name type="ordered locus">Psyc_0056</name>
</gene>
<evidence type="ECO:0000255" key="1">
    <source>
        <dbReference type="HAMAP-Rule" id="MF_00651"/>
    </source>
</evidence>
<name>YQGF_PSYA2</name>
<comment type="function">
    <text evidence="1">Could be a nuclease involved in processing of the 5'-end of pre-16S rRNA.</text>
</comment>
<comment type="subcellular location">
    <subcellularLocation>
        <location evidence="1">Cytoplasm</location>
    </subcellularLocation>
</comment>
<comment type="similarity">
    <text evidence="1">Belongs to the YqgF nuclease family.</text>
</comment>
<proteinExistence type="inferred from homology"/>
<accession>Q4FVM8</accession>
<sequence length="177" mass="19376">MVDSTLIKDSNDTDTDTGVAEPAIKPHLILALDYGVKKMGMALGNSLTETARAFDILAMNNGQPDWDNLLGIIKVWGVAKVVVGLPLNMDGSSSMLSKRAHKFARRLAHRIMEQHLPVIVSLCDERLTSVAAREIAWENGWIQNERDPIDDISACILMSTYFADPNSSIAIDAIKAD</sequence>
<organism>
    <name type="scientific">Psychrobacter arcticus (strain DSM 17307 / VKM B-2377 / 273-4)</name>
    <dbReference type="NCBI Taxonomy" id="259536"/>
    <lineage>
        <taxon>Bacteria</taxon>
        <taxon>Pseudomonadati</taxon>
        <taxon>Pseudomonadota</taxon>
        <taxon>Gammaproteobacteria</taxon>
        <taxon>Moraxellales</taxon>
        <taxon>Moraxellaceae</taxon>
        <taxon>Psychrobacter</taxon>
    </lineage>
</organism>
<reference key="1">
    <citation type="journal article" date="2010" name="Appl. Environ. Microbiol.">
        <title>The genome sequence of Psychrobacter arcticus 273-4, a psychroactive Siberian permafrost bacterium, reveals mechanisms for adaptation to low-temperature growth.</title>
        <authorList>
            <person name="Ayala-del-Rio H.L."/>
            <person name="Chain P.S."/>
            <person name="Grzymski J.J."/>
            <person name="Ponder M.A."/>
            <person name="Ivanova N."/>
            <person name="Bergholz P.W."/>
            <person name="Di Bartolo G."/>
            <person name="Hauser L."/>
            <person name="Land M."/>
            <person name="Bakermans C."/>
            <person name="Rodrigues D."/>
            <person name="Klappenbach J."/>
            <person name="Zarka D."/>
            <person name="Larimer F."/>
            <person name="Richardson P."/>
            <person name="Murray A."/>
            <person name="Thomashow M."/>
            <person name="Tiedje J.M."/>
        </authorList>
    </citation>
    <scope>NUCLEOTIDE SEQUENCE [LARGE SCALE GENOMIC DNA]</scope>
    <source>
        <strain>DSM 17307 / VKM B-2377 / 273-4</strain>
    </source>
</reference>
<dbReference type="EC" id="3.1.-.-" evidence="1"/>
<dbReference type="EMBL" id="CP000082">
    <property type="protein sequence ID" value="AAZ17930.1"/>
    <property type="molecule type" value="Genomic_DNA"/>
</dbReference>
<dbReference type="RefSeq" id="WP_011279369.1">
    <property type="nucleotide sequence ID" value="NC_007204.1"/>
</dbReference>
<dbReference type="SMR" id="Q4FVM8"/>
<dbReference type="STRING" id="259536.Psyc_0056"/>
<dbReference type="KEGG" id="par:Psyc_0056"/>
<dbReference type="eggNOG" id="COG0816">
    <property type="taxonomic scope" value="Bacteria"/>
</dbReference>
<dbReference type="HOGENOM" id="CLU_098240_3_0_6"/>
<dbReference type="OrthoDB" id="9796140at2"/>
<dbReference type="Proteomes" id="UP000000546">
    <property type="component" value="Chromosome"/>
</dbReference>
<dbReference type="GO" id="GO:0005829">
    <property type="term" value="C:cytosol"/>
    <property type="evidence" value="ECO:0007669"/>
    <property type="project" value="TreeGrafter"/>
</dbReference>
<dbReference type="GO" id="GO:0004518">
    <property type="term" value="F:nuclease activity"/>
    <property type="evidence" value="ECO:0007669"/>
    <property type="project" value="UniProtKB-KW"/>
</dbReference>
<dbReference type="GO" id="GO:0000967">
    <property type="term" value="P:rRNA 5'-end processing"/>
    <property type="evidence" value="ECO:0007669"/>
    <property type="project" value="UniProtKB-UniRule"/>
</dbReference>
<dbReference type="CDD" id="cd16964">
    <property type="entry name" value="YqgF"/>
    <property type="match status" value="1"/>
</dbReference>
<dbReference type="Gene3D" id="3.30.420.140">
    <property type="entry name" value="YqgF/RNase H-like domain"/>
    <property type="match status" value="1"/>
</dbReference>
<dbReference type="HAMAP" id="MF_00651">
    <property type="entry name" value="Nuclease_YqgF"/>
    <property type="match status" value="1"/>
</dbReference>
<dbReference type="InterPro" id="IPR012337">
    <property type="entry name" value="RNaseH-like_sf"/>
</dbReference>
<dbReference type="InterPro" id="IPR005227">
    <property type="entry name" value="YqgF"/>
</dbReference>
<dbReference type="InterPro" id="IPR006641">
    <property type="entry name" value="YqgF/RNaseH-like_dom"/>
</dbReference>
<dbReference type="InterPro" id="IPR037027">
    <property type="entry name" value="YqgF/RNaseH-like_dom_sf"/>
</dbReference>
<dbReference type="NCBIfam" id="TIGR00250">
    <property type="entry name" value="RNAse_H_YqgF"/>
    <property type="match status" value="1"/>
</dbReference>
<dbReference type="PANTHER" id="PTHR33317">
    <property type="entry name" value="POLYNUCLEOTIDYL TRANSFERASE, RIBONUCLEASE H-LIKE SUPERFAMILY PROTEIN"/>
    <property type="match status" value="1"/>
</dbReference>
<dbReference type="PANTHER" id="PTHR33317:SF4">
    <property type="entry name" value="POLYNUCLEOTIDYL TRANSFERASE, RIBONUCLEASE H-LIKE SUPERFAMILY PROTEIN"/>
    <property type="match status" value="1"/>
</dbReference>
<dbReference type="Pfam" id="PF03652">
    <property type="entry name" value="RuvX"/>
    <property type="match status" value="1"/>
</dbReference>
<dbReference type="SMART" id="SM00732">
    <property type="entry name" value="YqgFc"/>
    <property type="match status" value="1"/>
</dbReference>
<dbReference type="SUPFAM" id="SSF53098">
    <property type="entry name" value="Ribonuclease H-like"/>
    <property type="match status" value="1"/>
</dbReference>
<feature type="chain" id="PRO_0000257569" description="Putative pre-16S rRNA nuclease">
    <location>
        <begin position="1"/>
        <end position="177"/>
    </location>
</feature>